<feature type="chain" id="PRO_0000258373" description="Phosphoribosylformylglycinamidine cyclo-ligase">
    <location>
        <begin position="1"/>
        <end position="344"/>
    </location>
</feature>
<feature type="helix" evidence="2">
    <location>
        <begin position="16"/>
        <end position="29"/>
    </location>
</feature>
<feature type="strand" evidence="2">
    <location>
        <begin position="45"/>
        <end position="48"/>
    </location>
</feature>
<feature type="strand" evidence="2">
    <location>
        <begin position="54"/>
        <end position="64"/>
    </location>
</feature>
<feature type="helix" evidence="2">
    <location>
        <begin position="68"/>
        <end position="75"/>
    </location>
</feature>
<feature type="helix" evidence="2">
    <location>
        <begin position="81"/>
        <end position="94"/>
    </location>
</feature>
<feature type="turn" evidence="2">
    <location>
        <begin position="95"/>
        <end position="97"/>
    </location>
</feature>
<feature type="strand" evidence="2">
    <location>
        <begin position="99"/>
        <end position="111"/>
    </location>
</feature>
<feature type="helix" evidence="2">
    <location>
        <begin position="114"/>
        <end position="131"/>
    </location>
</feature>
<feature type="strand" evidence="2">
    <location>
        <begin position="134"/>
        <end position="142"/>
    </location>
</feature>
<feature type="turn" evidence="2">
    <location>
        <begin position="144"/>
        <end position="146"/>
    </location>
</feature>
<feature type="strand" evidence="2">
    <location>
        <begin position="152"/>
        <end position="163"/>
    </location>
</feature>
<feature type="helix" evidence="2">
    <location>
        <begin position="164"/>
        <end position="166"/>
    </location>
</feature>
<feature type="strand" evidence="2">
    <location>
        <begin position="178"/>
        <end position="183"/>
    </location>
</feature>
<feature type="strand" evidence="2">
    <location>
        <begin position="185"/>
        <end position="187"/>
    </location>
</feature>
<feature type="helix" evidence="2">
    <location>
        <begin position="192"/>
        <end position="202"/>
    </location>
</feature>
<feature type="strand" evidence="2">
    <location>
        <begin position="208"/>
        <end position="211"/>
    </location>
</feature>
<feature type="helix" evidence="2">
    <location>
        <begin position="216"/>
        <end position="220"/>
    </location>
</feature>
<feature type="helix" evidence="2">
    <location>
        <begin position="228"/>
        <end position="237"/>
    </location>
</feature>
<feature type="strand" evidence="2">
    <location>
        <begin position="242"/>
        <end position="245"/>
    </location>
</feature>
<feature type="helix" evidence="2">
    <location>
        <begin position="250"/>
        <end position="254"/>
    </location>
</feature>
<feature type="helix" evidence="2">
    <location>
        <begin position="255"/>
        <end position="258"/>
    </location>
</feature>
<feature type="strand" evidence="2">
    <location>
        <begin position="263"/>
        <end position="268"/>
    </location>
</feature>
<feature type="helix" evidence="2">
    <location>
        <begin position="269"/>
        <end position="271"/>
    </location>
</feature>
<feature type="helix" evidence="2">
    <location>
        <begin position="276"/>
        <end position="285"/>
    </location>
</feature>
<feature type="helix" evidence="2">
    <location>
        <begin position="289"/>
        <end position="292"/>
    </location>
</feature>
<feature type="turn" evidence="2">
    <location>
        <begin position="293"/>
        <end position="295"/>
    </location>
</feature>
<feature type="strand" evidence="2">
    <location>
        <begin position="300"/>
        <end position="306"/>
    </location>
</feature>
<feature type="helix" evidence="2">
    <location>
        <begin position="308"/>
        <end position="320"/>
    </location>
</feature>
<feature type="strand" evidence="2">
    <location>
        <begin position="325"/>
        <end position="333"/>
    </location>
</feature>
<feature type="strand" evidence="2">
    <location>
        <begin position="340"/>
        <end position="344"/>
    </location>
</feature>
<evidence type="ECO:0000255" key="1">
    <source>
        <dbReference type="HAMAP-Rule" id="MF_00741"/>
    </source>
</evidence>
<evidence type="ECO:0007829" key="2">
    <source>
        <dbReference type="PDB" id="5VK4"/>
    </source>
</evidence>
<gene>
    <name evidence="1" type="primary">purM</name>
    <name type="ordered locus">NGO_0526</name>
</gene>
<comment type="catalytic activity">
    <reaction evidence="1">
        <text>2-formamido-N(1)-(5-O-phospho-beta-D-ribosyl)acetamidine + ATP = 5-amino-1-(5-phospho-beta-D-ribosyl)imidazole + ADP + phosphate + H(+)</text>
        <dbReference type="Rhea" id="RHEA:23032"/>
        <dbReference type="ChEBI" id="CHEBI:15378"/>
        <dbReference type="ChEBI" id="CHEBI:30616"/>
        <dbReference type="ChEBI" id="CHEBI:43474"/>
        <dbReference type="ChEBI" id="CHEBI:137981"/>
        <dbReference type="ChEBI" id="CHEBI:147287"/>
        <dbReference type="ChEBI" id="CHEBI:456216"/>
        <dbReference type="EC" id="6.3.3.1"/>
    </reaction>
</comment>
<comment type="pathway">
    <text evidence="1">Purine metabolism; IMP biosynthesis via de novo pathway; 5-amino-1-(5-phospho-D-ribosyl)imidazole from N(2)-formyl-N(1)-(5-phospho-D-ribosyl)glycinamide: step 2/2.</text>
</comment>
<comment type="subcellular location">
    <subcellularLocation>
        <location evidence="1">Cytoplasm</location>
    </subcellularLocation>
</comment>
<comment type="similarity">
    <text evidence="1">Belongs to the AIR synthase family.</text>
</comment>
<organism>
    <name type="scientific">Neisseria gonorrhoeae (strain ATCC 700825 / FA 1090)</name>
    <dbReference type="NCBI Taxonomy" id="242231"/>
    <lineage>
        <taxon>Bacteria</taxon>
        <taxon>Pseudomonadati</taxon>
        <taxon>Pseudomonadota</taxon>
        <taxon>Betaproteobacteria</taxon>
        <taxon>Neisseriales</taxon>
        <taxon>Neisseriaceae</taxon>
        <taxon>Neisseria</taxon>
    </lineage>
</organism>
<proteinExistence type="evidence at protein level"/>
<accession>Q5F973</accession>
<keyword id="KW-0002">3D-structure</keyword>
<keyword id="KW-0067">ATP-binding</keyword>
<keyword id="KW-0963">Cytoplasm</keyword>
<keyword id="KW-0436">Ligase</keyword>
<keyword id="KW-0547">Nucleotide-binding</keyword>
<keyword id="KW-0658">Purine biosynthesis</keyword>
<keyword id="KW-1185">Reference proteome</keyword>
<reference key="1">
    <citation type="submission" date="2003-03" db="EMBL/GenBank/DDBJ databases">
        <title>The complete genome sequence of Neisseria gonorrhoeae.</title>
        <authorList>
            <person name="Lewis L.A."/>
            <person name="Gillaspy A.F."/>
            <person name="McLaughlin R.E."/>
            <person name="Gipson M."/>
            <person name="Ducey T.F."/>
            <person name="Ownbey T."/>
            <person name="Hartman K."/>
            <person name="Nydick C."/>
            <person name="Carson M.B."/>
            <person name="Vaughn J."/>
            <person name="Thomson C."/>
            <person name="Song L."/>
            <person name="Lin S."/>
            <person name="Yuan X."/>
            <person name="Najar F."/>
            <person name="Zhan M."/>
            <person name="Ren Q."/>
            <person name="Zhu H."/>
            <person name="Qi S."/>
            <person name="Kenton S.M."/>
            <person name="Lai H."/>
            <person name="White J.D."/>
            <person name="Clifton S."/>
            <person name="Roe B.A."/>
            <person name="Dyer D.W."/>
        </authorList>
    </citation>
    <scope>NUCLEOTIDE SEQUENCE [LARGE SCALE GENOMIC DNA]</scope>
    <source>
        <strain>ATCC 700825 / FA 1090</strain>
    </source>
</reference>
<name>PUR5_NEIG1</name>
<sequence>MSTSLSYRDAGVGIDAGDQLVEKIKPFAKRTMRPEVLGDLGGFGALVEIGKKYQNPVLVSGTDGVGTKLKLAFDWDKHDTVGIDLVAMSVNDILVQGAEPLFFLDYFACGKLDVPRATDVIKGIAQGCEESGCALIGGETAEMPGMYPVGEYDLAGFAVGVVEKENVITGLSIGAGDVVLGLASNGAHSNGYSLIRKIIERDNPDLDAEFDNGKTLREAVIAPTRLYVKPILAALEKFTIKGMAHITGGGITENVPRVLPKNTVAQIDAESWELPKLFQWLQKAGNVETQEMYRTFNCGIGMVVIVAAEDADAVRSFLSGQGETVYRLGCIRERQGNEHQTQVA</sequence>
<dbReference type="EC" id="6.3.3.1" evidence="1"/>
<dbReference type="EMBL" id="AE004969">
    <property type="protein sequence ID" value="AAW89264.1"/>
    <property type="molecule type" value="Genomic_DNA"/>
</dbReference>
<dbReference type="RefSeq" id="WP_003691398.1">
    <property type="nucleotide sequence ID" value="NC_002946.2"/>
</dbReference>
<dbReference type="RefSeq" id="YP_207676.1">
    <property type="nucleotide sequence ID" value="NC_002946.2"/>
</dbReference>
<dbReference type="PDB" id="5VK4">
    <property type="method" value="X-ray"/>
    <property type="resolution" value="2.65 A"/>
    <property type="chains" value="A/B=1-344"/>
</dbReference>
<dbReference type="PDBsum" id="5VK4"/>
<dbReference type="SMR" id="Q5F973"/>
<dbReference type="STRING" id="242231.NGO_0526"/>
<dbReference type="GeneID" id="66752866"/>
<dbReference type="KEGG" id="ngo:NGO_0526"/>
<dbReference type="PATRIC" id="fig|242231.10.peg.621"/>
<dbReference type="HOGENOM" id="CLU_047116_0_0_4"/>
<dbReference type="UniPathway" id="UPA00074">
    <property type="reaction ID" value="UER00129"/>
</dbReference>
<dbReference type="Proteomes" id="UP000000535">
    <property type="component" value="Chromosome"/>
</dbReference>
<dbReference type="GO" id="GO:0005829">
    <property type="term" value="C:cytosol"/>
    <property type="evidence" value="ECO:0007669"/>
    <property type="project" value="TreeGrafter"/>
</dbReference>
<dbReference type="GO" id="GO:0005524">
    <property type="term" value="F:ATP binding"/>
    <property type="evidence" value="ECO:0007669"/>
    <property type="project" value="UniProtKB-KW"/>
</dbReference>
<dbReference type="GO" id="GO:0004637">
    <property type="term" value="F:phosphoribosylamine-glycine ligase activity"/>
    <property type="evidence" value="ECO:0007669"/>
    <property type="project" value="TreeGrafter"/>
</dbReference>
<dbReference type="GO" id="GO:0004641">
    <property type="term" value="F:phosphoribosylformylglycinamidine cyclo-ligase activity"/>
    <property type="evidence" value="ECO:0007669"/>
    <property type="project" value="UniProtKB-UniRule"/>
</dbReference>
<dbReference type="GO" id="GO:0006189">
    <property type="term" value="P:'de novo' IMP biosynthetic process"/>
    <property type="evidence" value="ECO:0007669"/>
    <property type="project" value="UniProtKB-UniRule"/>
</dbReference>
<dbReference type="GO" id="GO:0046084">
    <property type="term" value="P:adenine biosynthetic process"/>
    <property type="evidence" value="ECO:0007669"/>
    <property type="project" value="TreeGrafter"/>
</dbReference>
<dbReference type="CDD" id="cd02196">
    <property type="entry name" value="PurM"/>
    <property type="match status" value="1"/>
</dbReference>
<dbReference type="FunFam" id="3.30.1330.10:FF:000001">
    <property type="entry name" value="Phosphoribosylformylglycinamidine cyclo-ligase"/>
    <property type="match status" value="1"/>
</dbReference>
<dbReference type="FunFam" id="3.90.650.10:FF:000001">
    <property type="entry name" value="Phosphoribosylformylglycinamidine cyclo-ligase"/>
    <property type="match status" value="1"/>
</dbReference>
<dbReference type="Gene3D" id="3.90.650.10">
    <property type="entry name" value="PurM-like C-terminal domain"/>
    <property type="match status" value="1"/>
</dbReference>
<dbReference type="Gene3D" id="3.30.1330.10">
    <property type="entry name" value="PurM-like, N-terminal domain"/>
    <property type="match status" value="1"/>
</dbReference>
<dbReference type="HAMAP" id="MF_00741">
    <property type="entry name" value="AIRS"/>
    <property type="match status" value="1"/>
</dbReference>
<dbReference type="InterPro" id="IPR010918">
    <property type="entry name" value="PurM-like_C_dom"/>
</dbReference>
<dbReference type="InterPro" id="IPR036676">
    <property type="entry name" value="PurM-like_C_sf"/>
</dbReference>
<dbReference type="InterPro" id="IPR016188">
    <property type="entry name" value="PurM-like_N"/>
</dbReference>
<dbReference type="InterPro" id="IPR036921">
    <property type="entry name" value="PurM-like_N_sf"/>
</dbReference>
<dbReference type="InterPro" id="IPR004733">
    <property type="entry name" value="PurM_cligase"/>
</dbReference>
<dbReference type="NCBIfam" id="TIGR00878">
    <property type="entry name" value="purM"/>
    <property type="match status" value="1"/>
</dbReference>
<dbReference type="PANTHER" id="PTHR10520:SF12">
    <property type="entry name" value="TRIFUNCTIONAL PURINE BIOSYNTHETIC PROTEIN ADENOSINE-3"/>
    <property type="match status" value="1"/>
</dbReference>
<dbReference type="PANTHER" id="PTHR10520">
    <property type="entry name" value="TRIFUNCTIONAL PURINE BIOSYNTHETIC PROTEIN ADENOSINE-3-RELATED"/>
    <property type="match status" value="1"/>
</dbReference>
<dbReference type="Pfam" id="PF00586">
    <property type="entry name" value="AIRS"/>
    <property type="match status" value="1"/>
</dbReference>
<dbReference type="Pfam" id="PF02769">
    <property type="entry name" value="AIRS_C"/>
    <property type="match status" value="1"/>
</dbReference>
<dbReference type="SUPFAM" id="SSF56042">
    <property type="entry name" value="PurM C-terminal domain-like"/>
    <property type="match status" value="1"/>
</dbReference>
<dbReference type="SUPFAM" id="SSF55326">
    <property type="entry name" value="PurM N-terminal domain-like"/>
    <property type="match status" value="1"/>
</dbReference>
<protein>
    <recommendedName>
        <fullName evidence="1">Phosphoribosylformylglycinamidine cyclo-ligase</fullName>
        <ecNumber evidence="1">6.3.3.1</ecNumber>
    </recommendedName>
    <alternativeName>
        <fullName evidence="1">AIR synthase</fullName>
    </alternativeName>
    <alternativeName>
        <fullName evidence="1">AIRS</fullName>
    </alternativeName>
    <alternativeName>
        <fullName evidence="1">Phosphoribosyl-aminoimidazole synthetase</fullName>
    </alternativeName>
</protein>